<reference key="1">
    <citation type="journal article" date="2002" name="Nature">
        <title>Sequence and analysis of rice chromosome 4.</title>
        <authorList>
            <person name="Feng Q."/>
            <person name="Zhang Y."/>
            <person name="Hao P."/>
            <person name="Wang S."/>
            <person name="Fu G."/>
            <person name="Huang Y."/>
            <person name="Li Y."/>
            <person name="Zhu J."/>
            <person name="Liu Y."/>
            <person name="Hu X."/>
            <person name="Jia P."/>
            <person name="Zhang Y."/>
            <person name="Zhao Q."/>
            <person name="Ying K."/>
            <person name="Yu S."/>
            <person name="Tang Y."/>
            <person name="Weng Q."/>
            <person name="Zhang L."/>
            <person name="Lu Y."/>
            <person name="Mu J."/>
            <person name="Lu Y."/>
            <person name="Zhang L.S."/>
            <person name="Yu Z."/>
            <person name="Fan D."/>
            <person name="Liu X."/>
            <person name="Lu T."/>
            <person name="Li C."/>
            <person name="Wu Y."/>
            <person name="Sun T."/>
            <person name="Lei H."/>
            <person name="Li T."/>
            <person name="Hu H."/>
            <person name="Guan J."/>
            <person name="Wu M."/>
            <person name="Zhang R."/>
            <person name="Zhou B."/>
            <person name="Chen Z."/>
            <person name="Chen L."/>
            <person name="Jin Z."/>
            <person name="Wang R."/>
            <person name="Yin H."/>
            <person name="Cai Z."/>
            <person name="Ren S."/>
            <person name="Lv G."/>
            <person name="Gu W."/>
            <person name="Zhu G."/>
            <person name="Tu Y."/>
            <person name="Jia J."/>
            <person name="Zhang Y."/>
            <person name="Chen J."/>
            <person name="Kang H."/>
            <person name="Chen X."/>
            <person name="Shao C."/>
            <person name="Sun Y."/>
            <person name="Hu Q."/>
            <person name="Zhang X."/>
            <person name="Zhang W."/>
            <person name="Wang L."/>
            <person name="Ding C."/>
            <person name="Sheng H."/>
            <person name="Gu J."/>
            <person name="Chen S."/>
            <person name="Ni L."/>
            <person name="Zhu F."/>
            <person name="Chen W."/>
            <person name="Lan L."/>
            <person name="Lai Y."/>
            <person name="Cheng Z."/>
            <person name="Gu M."/>
            <person name="Jiang J."/>
            <person name="Li J."/>
            <person name="Hong G."/>
            <person name="Xue Y."/>
            <person name="Han B."/>
        </authorList>
    </citation>
    <scope>NUCLEOTIDE SEQUENCE [LARGE SCALE GENOMIC DNA]</scope>
    <source>
        <strain>cv. Nipponbare</strain>
    </source>
</reference>
<reference key="2">
    <citation type="journal article" date="2005" name="Nature">
        <title>The map-based sequence of the rice genome.</title>
        <authorList>
            <consortium name="International rice genome sequencing project (IRGSP)"/>
        </authorList>
    </citation>
    <scope>NUCLEOTIDE SEQUENCE [LARGE SCALE GENOMIC DNA]</scope>
    <source>
        <strain>cv. Nipponbare</strain>
    </source>
</reference>
<reference key="3">
    <citation type="journal article" date="2008" name="Nucleic Acids Res.">
        <title>The rice annotation project database (RAP-DB): 2008 update.</title>
        <authorList>
            <consortium name="The rice annotation project (RAP)"/>
        </authorList>
    </citation>
    <scope>GENOME REANNOTATION</scope>
    <source>
        <strain>cv. Nipponbare</strain>
    </source>
</reference>
<reference key="4">
    <citation type="journal article" date="2013" name="Rice">
        <title>Improvement of the Oryza sativa Nipponbare reference genome using next generation sequence and optical map data.</title>
        <authorList>
            <person name="Kawahara Y."/>
            <person name="de la Bastide M."/>
            <person name="Hamilton J.P."/>
            <person name="Kanamori H."/>
            <person name="McCombie W.R."/>
            <person name="Ouyang S."/>
            <person name="Schwartz D.C."/>
            <person name="Tanaka T."/>
            <person name="Wu J."/>
            <person name="Zhou S."/>
            <person name="Childs K.L."/>
            <person name="Davidson R.M."/>
            <person name="Lin H."/>
            <person name="Quesada-Ocampo L."/>
            <person name="Vaillancourt B."/>
            <person name="Sakai H."/>
            <person name="Lee S.S."/>
            <person name="Kim J."/>
            <person name="Numa H."/>
            <person name="Itoh T."/>
            <person name="Buell C.R."/>
            <person name="Matsumoto T."/>
        </authorList>
    </citation>
    <scope>GENOME REANNOTATION</scope>
    <source>
        <strain>cv. Nipponbare</strain>
    </source>
</reference>
<reference key="5">
    <citation type="journal article" date="2005" name="PLoS Biol.">
        <title>The genomes of Oryza sativa: a history of duplications.</title>
        <authorList>
            <person name="Yu J."/>
            <person name="Wang J."/>
            <person name="Lin W."/>
            <person name="Li S."/>
            <person name="Li H."/>
            <person name="Zhou J."/>
            <person name="Ni P."/>
            <person name="Dong W."/>
            <person name="Hu S."/>
            <person name="Zeng C."/>
            <person name="Zhang J."/>
            <person name="Zhang Y."/>
            <person name="Li R."/>
            <person name="Xu Z."/>
            <person name="Li S."/>
            <person name="Li X."/>
            <person name="Zheng H."/>
            <person name="Cong L."/>
            <person name="Lin L."/>
            <person name="Yin J."/>
            <person name="Geng J."/>
            <person name="Li G."/>
            <person name="Shi J."/>
            <person name="Liu J."/>
            <person name="Lv H."/>
            <person name="Li J."/>
            <person name="Wang J."/>
            <person name="Deng Y."/>
            <person name="Ran L."/>
            <person name="Shi X."/>
            <person name="Wang X."/>
            <person name="Wu Q."/>
            <person name="Li C."/>
            <person name="Ren X."/>
            <person name="Wang J."/>
            <person name="Wang X."/>
            <person name="Li D."/>
            <person name="Liu D."/>
            <person name="Zhang X."/>
            <person name="Ji Z."/>
            <person name="Zhao W."/>
            <person name="Sun Y."/>
            <person name="Zhang Z."/>
            <person name="Bao J."/>
            <person name="Han Y."/>
            <person name="Dong L."/>
            <person name="Ji J."/>
            <person name="Chen P."/>
            <person name="Wu S."/>
            <person name="Liu J."/>
            <person name="Xiao Y."/>
            <person name="Bu D."/>
            <person name="Tan J."/>
            <person name="Yang L."/>
            <person name="Ye C."/>
            <person name="Zhang J."/>
            <person name="Xu J."/>
            <person name="Zhou Y."/>
            <person name="Yu Y."/>
            <person name="Zhang B."/>
            <person name="Zhuang S."/>
            <person name="Wei H."/>
            <person name="Liu B."/>
            <person name="Lei M."/>
            <person name="Yu H."/>
            <person name="Li Y."/>
            <person name="Xu H."/>
            <person name="Wei S."/>
            <person name="He X."/>
            <person name="Fang L."/>
            <person name="Zhang Z."/>
            <person name="Zhang Y."/>
            <person name="Huang X."/>
            <person name="Su Z."/>
            <person name="Tong W."/>
            <person name="Li J."/>
            <person name="Tong Z."/>
            <person name="Li S."/>
            <person name="Ye J."/>
            <person name="Wang L."/>
            <person name="Fang L."/>
            <person name="Lei T."/>
            <person name="Chen C.-S."/>
            <person name="Chen H.-C."/>
            <person name="Xu Z."/>
            <person name="Li H."/>
            <person name="Huang H."/>
            <person name="Zhang F."/>
            <person name="Xu H."/>
            <person name="Li N."/>
            <person name="Zhao C."/>
            <person name="Li S."/>
            <person name="Dong L."/>
            <person name="Huang Y."/>
            <person name="Li L."/>
            <person name="Xi Y."/>
            <person name="Qi Q."/>
            <person name="Li W."/>
            <person name="Zhang B."/>
            <person name="Hu W."/>
            <person name="Zhang Y."/>
            <person name="Tian X."/>
            <person name="Jiao Y."/>
            <person name="Liang X."/>
            <person name="Jin J."/>
            <person name="Gao L."/>
            <person name="Zheng W."/>
            <person name="Hao B."/>
            <person name="Liu S.-M."/>
            <person name="Wang W."/>
            <person name="Yuan L."/>
            <person name="Cao M."/>
            <person name="McDermott J."/>
            <person name="Samudrala R."/>
            <person name="Wang J."/>
            <person name="Wong G.K.-S."/>
            <person name="Yang H."/>
        </authorList>
    </citation>
    <scope>NUCLEOTIDE SEQUENCE [LARGE SCALE GENOMIC DNA]</scope>
    <source>
        <strain>cv. Nipponbare</strain>
    </source>
</reference>
<reference key="6">
    <citation type="journal article" date="2003" name="Science">
        <title>Collection, mapping, and annotation of over 28,000 cDNA clones from japonica rice.</title>
        <authorList>
            <consortium name="The rice full-length cDNA consortium"/>
        </authorList>
    </citation>
    <scope>NUCLEOTIDE SEQUENCE [LARGE SCALE MRNA]</scope>
    <source>
        <strain>cv. Nipponbare</strain>
    </source>
</reference>
<proteinExistence type="evidence at transcript level"/>
<protein>
    <recommendedName>
        <fullName>Probable aldo-keto reductase 1</fullName>
        <ecNumber>1.1.1.-</ecNumber>
    </recommendedName>
</protein>
<gene>
    <name type="ordered locus">Os04g0337500</name>
    <name type="ordered locus">LOC_Os04g26870</name>
    <name type="ORF">OsJ_14313</name>
    <name type="ORF">OSJNBa0008A08.8</name>
</gene>
<comment type="similarity">
    <text evidence="2">Belongs to the aldo/keto reductase family.</text>
</comment>
<comment type="sequence caution" evidence="2">
    <conflict type="erroneous initiation">
        <sequence resource="EMBL-CDS" id="CAE01600"/>
    </conflict>
    <text>Truncated N-terminus.</text>
</comment>
<comment type="sequence caution" evidence="2">
    <conflict type="erroneous gene model prediction">
        <sequence resource="EMBL-CDS" id="EEE60756"/>
    </conflict>
</comment>
<comment type="sequence caution" evidence="2">
    <conflict type="erroneous initiation">
        <sequence resource="EMBL-CDS" id="EEE60756"/>
    </conflict>
    <text>Truncated N-terminus.</text>
</comment>
<evidence type="ECO:0000250" key="1"/>
<evidence type="ECO:0000305" key="2"/>
<accession>Q0JE32</accession>
<accession>A0A0P0W910</accession>
<accession>B9FEH3</accession>
<accession>Q7XTA2</accession>
<feature type="chain" id="PRO_0000415746" description="Probable aldo-keto reductase 1">
    <location>
        <begin position="1"/>
        <end position="350"/>
    </location>
</feature>
<feature type="active site" description="Proton donor" evidence="1">
    <location>
        <position position="67"/>
    </location>
</feature>
<feature type="binding site" evidence="1">
    <location>
        <position position="135"/>
    </location>
    <ligand>
        <name>substrate</name>
    </ligand>
</feature>
<feature type="binding site" evidence="1">
    <location>
        <begin position="214"/>
        <end position="224"/>
    </location>
    <ligand>
        <name>NADP(+)</name>
        <dbReference type="ChEBI" id="CHEBI:58349"/>
    </ligand>
</feature>
<organism>
    <name type="scientific">Oryza sativa subsp. japonica</name>
    <name type="common">Rice</name>
    <dbReference type="NCBI Taxonomy" id="39947"/>
    <lineage>
        <taxon>Eukaryota</taxon>
        <taxon>Viridiplantae</taxon>
        <taxon>Streptophyta</taxon>
        <taxon>Embryophyta</taxon>
        <taxon>Tracheophyta</taxon>
        <taxon>Spermatophyta</taxon>
        <taxon>Magnoliopsida</taxon>
        <taxon>Liliopsida</taxon>
        <taxon>Poales</taxon>
        <taxon>Poaceae</taxon>
        <taxon>BOP clade</taxon>
        <taxon>Oryzoideae</taxon>
        <taxon>Oryzeae</taxon>
        <taxon>Oryzinae</taxon>
        <taxon>Oryza</taxon>
        <taxon>Oryza sativa</taxon>
    </lineage>
</organism>
<name>AKR1_ORYSJ</name>
<keyword id="KW-0521">NADP</keyword>
<keyword id="KW-0560">Oxidoreductase</keyword>
<keyword id="KW-1185">Reference proteome</keyword>
<dbReference type="EC" id="1.1.1.-"/>
<dbReference type="EMBL" id="AL606589">
    <property type="protein sequence ID" value="CAE01600.2"/>
    <property type="status" value="ALT_INIT"/>
    <property type="molecule type" value="Genomic_DNA"/>
</dbReference>
<dbReference type="EMBL" id="AP008210">
    <property type="protein sequence ID" value="BAF14405.1"/>
    <property type="molecule type" value="Genomic_DNA"/>
</dbReference>
<dbReference type="EMBL" id="AP014960">
    <property type="protein sequence ID" value="BAS88645.1"/>
    <property type="molecule type" value="Genomic_DNA"/>
</dbReference>
<dbReference type="EMBL" id="CM000141">
    <property type="protein sequence ID" value="EEE60756.1"/>
    <property type="status" value="ALT_SEQ"/>
    <property type="molecule type" value="Genomic_DNA"/>
</dbReference>
<dbReference type="EMBL" id="AK104524">
    <property type="protein sequence ID" value="BAG96753.1"/>
    <property type="molecule type" value="mRNA"/>
</dbReference>
<dbReference type="SMR" id="Q0JE32"/>
<dbReference type="FunCoup" id="Q0JE32">
    <property type="interactions" value="49"/>
</dbReference>
<dbReference type="STRING" id="39947.Q0JE32"/>
<dbReference type="PaxDb" id="39947-Q0JE32"/>
<dbReference type="EnsemblPlants" id="Os04t0337500-01">
    <property type="protein sequence ID" value="Os04t0337500-01"/>
    <property type="gene ID" value="Os04g0337500"/>
</dbReference>
<dbReference type="Gramene" id="Os04t0337500-01">
    <property type="protein sequence ID" value="Os04t0337500-01"/>
    <property type="gene ID" value="Os04g0337500"/>
</dbReference>
<dbReference type="KEGG" id="dosa:Os04g0337500"/>
<dbReference type="eggNOG" id="KOG1575">
    <property type="taxonomic scope" value="Eukaryota"/>
</dbReference>
<dbReference type="InParanoid" id="Q0JE32"/>
<dbReference type="OMA" id="FIPWAPL"/>
<dbReference type="OrthoDB" id="37537at2759"/>
<dbReference type="Proteomes" id="UP000000763">
    <property type="component" value="Chromosome 4"/>
</dbReference>
<dbReference type="Proteomes" id="UP000007752">
    <property type="component" value="Chromosome 4"/>
</dbReference>
<dbReference type="Proteomes" id="UP000059680">
    <property type="component" value="Chromosome 4"/>
</dbReference>
<dbReference type="ExpressionAtlas" id="Q0JE32">
    <property type="expression patterns" value="baseline and differential"/>
</dbReference>
<dbReference type="GO" id="GO:0005737">
    <property type="term" value="C:cytoplasm"/>
    <property type="evidence" value="ECO:0000318"/>
    <property type="project" value="GO_Central"/>
</dbReference>
<dbReference type="GO" id="GO:0004033">
    <property type="term" value="F:aldo-keto reductase (NADPH) activity"/>
    <property type="evidence" value="ECO:0000318"/>
    <property type="project" value="GO_Central"/>
</dbReference>
<dbReference type="CDD" id="cd19145">
    <property type="entry name" value="AKR_AKR13D1"/>
    <property type="match status" value="1"/>
</dbReference>
<dbReference type="FunFam" id="3.20.20.100:FF:000048">
    <property type="entry name" value="Probable aldo-keto reductase 4"/>
    <property type="match status" value="1"/>
</dbReference>
<dbReference type="Gene3D" id="3.20.20.100">
    <property type="entry name" value="NADP-dependent oxidoreductase domain"/>
    <property type="match status" value="1"/>
</dbReference>
<dbReference type="InterPro" id="IPR050791">
    <property type="entry name" value="Aldo-Keto_reductase"/>
</dbReference>
<dbReference type="InterPro" id="IPR023210">
    <property type="entry name" value="NADP_OxRdtase_dom"/>
</dbReference>
<dbReference type="InterPro" id="IPR036812">
    <property type="entry name" value="NADP_OxRdtase_dom_sf"/>
</dbReference>
<dbReference type="PANTHER" id="PTHR43625">
    <property type="entry name" value="AFLATOXIN B1 ALDEHYDE REDUCTASE"/>
    <property type="match status" value="1"/>
</dbReference>
<dbReference type="PANTHER" id="PTHR43625:SF40">
    <property type="entry name" value="ALDO-KETO REDUCTASE YAKC [NADP(+)]"/>
    <property type="match status" value="1"/>
</dbReference>
<dbReference type="Pfam" id="PF00248">
    <property type="entry name" value="Aldo_ket_red"/>
    <property type="match status" value="1"/>
</dbReference>
<dbReference type="SUPFAM" id="SSF51430">
    <property type="entry name" value="NAD(P)-linked oxidoreductase"/>
    <property type="match status" value="1"/>
</dbReference>
<sequence>MAAAAMATVAVPRVKLGSQGMEVSAQGLGCMGMCPAFEPPKPEADMVALIRHAIAAGVTFFDTSDLYGPHTNEVLLGKALQGGGVRDRVELATKFGKFFAGGKPGIRGDPAYVRAACEGSLRRLGVDCIDLYYQHRVDKKVPIEVTIGELKKLVEEGKIRYIGLCEASASTIRRAHAVHPITAVQLEWSLWSRDVEEDIVPTCRELGIGIVAYSPLGKGFFSSGAKLVDSLPDHDFRKLIPRFQPGNIEKNAEIFERVNEMAARKGCTPSQLALAWIHHQGRDVCPIPGTTKIENFNQNVAALSVKLTPAEMAELESYASNVHGDRYPLMMANTTWQDSETPPLSSWKSE</sequence>